<protein>
    <recommendedName>
        <fullName evidence="4 9">Immunoglobulin kappa variable 2D-29</fullName>
    </recommendedName>
</protein>
<evidence type="ECO:0000250" key="1">
    <source>
        <dbReference type="UniProtKB" id="P01602"/>
    </source>
</evidence>
<evidence type="ECO:0000255" key="2"/>
<evidence type="ECO:0000255" key="3">
    <source>
        <dbReference type="PROSITE-ProRule" id="PRU00114"/>
    </source>
</evidence>
<evidence type="ECO:0000303" key="4">
    <source>
    </source>
</evidence>
<evidence type="ECO:0000303" key="5">
    <source>
    </source>
</evidence>
<evidence type="ECO:0000303" key="6">
    <source>
    </source>
</evidence>
<evidence type="ECO:0000303" key="7">
    <source>
    </source>
</evidence>
<evidence type="ECO:0000303" key="8">
    <source>
    </source>
</evidence>
<evidence type="ECO:0000303" key="9">
    <source ref="3"/>
</evidence>
<evidence type="ECO:0000305" key="10"/>
<accession>A0A075B6S2</accession>
<accession>A0A087X0P6</accession>
<gene>
    <name evidence="4 9" type="primary">IGKV2D-29</name>
</gene>
<name>KVD29_HUMAN</name>
<keyword id="KW-1064">Adaptive immunity</keyword>
<keyword id="KW-1003">Cell membrane</keyword>
<keyword id="KW-1015">Disulfide bond</keyword>
<keyword id="KW-0391">Immunity</keyword>
<keyword id="KW-1280">Immunoglobulin</keyword>
<keyword id="KW-0393">Immunoglobulin domain</keyword>
<keyword id="KW-0472">Membrane</keyword>
<keyword id="KW-1267">Proteomics identification</keyword>
<keyword id="KW-1185">Reference proteome</keyword>
<keyword id="KW-0964">Secreted</keyword>
<keyword id="KW-0732">Signal</keyword>
<feature type="signal peptide" evidence="2">
    <location>
        <begin position="1"/>
        <end position="20"/>
    </location>
</feature>
<feature type="chain" id="PRO_5001705211" description="Immunoglobulin kappa variable 2D-29" evidence="2">
    <location>
        <begin position="21"/>
        <end position="120"/>
    </location>
</feature>
<feature type="domain" description="Ig-like" evidence="3">
    <location>
        <begin position="21"/>
        <end position="120" status="greater than"/>
    </location>
</feature>
<feature type="region of interest" description="Framework-1" evidence="1">
    <location>
        <begin position="21"/>
        <end position="43"/>
    </location>
</feature>
<feature type="region of interest" description="Complementarity-determining-1" evidence="1">
    <location>
        <begin position="44"/>
        <end position="59"/>
    </location>
</feature>
<feature type="region of interest" description="Framework-2" evidence="1">
    <location>
        <begin position="60"/>
        <end position="74"/>
    </location>
</feature>
<feature type="region of interest" description="Complementarity-determining-2" evidence="1">
    <location>
        <begin position="75"/>
        <end position="81"/>
    </location>
</feature>
<feature type="region of interest" description="Framework-3" evidence="1">
    <location>
        <begin position="82"/>
        <end position="113"/>
    </location>
</feature>
<feature type="region of interest" description="Complementarity-determining-3" evidence="1">
    <location>
        <begin position="114"/>
        <end position="120" status="greater than"/>
    </location>
</feature>
<feature type="disulfide bond" evidence="3">
    <location>
        <begin position="43"/>
        <end position="113"/>
    </location>
</feature>
<feature type="non-terminal residue">
    <location>
        <position position="120"/>
    </location>
</feature>
<dbReference type="EMBL" id="AC233264">
    <property type="status" value="NOT_ANNOTATED_CDS"/>
    <property type="molecule type" value="Genomic_DNA"/>
</dbReference>
<dbReference type="EMDB" id="EMD-10733"/>
<dbReference type="EMDB" id="EMD-21335"/>
<dbReference type="EMDB" id="EMD-26584"/>
<dbReference type="SMR" id="A0A075B6S2"/>
<dbReference type="FunCoup" id="A0A075B6S2">
    <property type="interactions" value="277"/>
</dbReference>
<dbReference type="STRING" id="9606.ENSP00000483567"/>
<dbReference type="IMGT_GENE-DB" id="IGKV2D-29"/>
<dbReference type="GlyGen" id="A0A075B6S2">
    <property type="glycosylation" value="1 site"/>
</dbReference>
<dbReference type="BioMuta" id="IGKV2D-29"/>
<dbReference type="jPOST" id="A0A075B6S2"/>
<dbReference type="MassIVE" id="A0A075B6S2"/>
<dbReference type="PRIDE" id="A0A075B6S2"/>
<dbReference type="Ensembl" id="ENST00000491977.1">
    <property type="protein sequence ID" value="ENSP00000417637.1"/>
    <property type="gene ID" value="ENSG00000243264.3"/>
</dbReference>
<dbReference type="UCSC" id="uc002stn.3">
    <property type="organism name" value="human"/>
</dbReference>
<dbReference type="UCSC" id="uc061lro.1">
    <property type="organism name" value="human"/>
</dbReference>
<dbReference type="AGR" id="HGNC:5800"/>
<dbReference type="GeneCards" id="IGKV2D-29"/>
<dbReference type="HGNC" id="HGNC:5800">
    <property type="gene designation" value="IGKV2D-29"/>
</dbReference>
<dbReference type="HPA" id="ENSG00000243264">
    <property type="expression patterns" value="Tissue enhanced (intestine, lymphoid tissue)"/>
</dbReference>
<dbReference type="neXtProt" id="NX_A0A075B6S2"/>
<dbReference type="OpenTargets" id="ENSG00000243264"/>
<dbReference type="VEuPathDB" id="HostDB:ENSG00000243264"/>
<dbReference type="GeneTree" id="ENSGT00940000154039"/>
<dbReference type="InParanoid" id="A0A075B6S2"/>
<dbReference type="OMA" id="YCYQGTH"/>
<dbReference type="OrthoDB" id="9519958at2759"/>
<dbReference type="PAN-GO" id="A0A075B6S2">
    <property type="GO annotations" value="3 GO annotations based on evolutionary models"/>
</dbReference>
<dbReference type="PhylomeDB" id="A0A075B6S2"/>
<dbReference type="ChiTaRS" id="IGKV2D-29">
    <property type="organism name" value="human"/>
</dbReference>
<dbReference type="Pharos" id="A0A075B6S2">
    <property type="development level" value="Tdark"/>
</dbReference>
<dbReference type="PRO" id="PR:A0A075B6S2"/>
<dbReference type="Proteomes" id="UP000005640">
    <property type="component" value="Chromosome 2"/>
</dbReference>
<dbReference type="RNAct" id="A0A075B6S2">
    <property type="molecule type" value="protein"/>
</dbReference>
<dbReference type="Bgee" id="ENSG00000243264">
    <property type="expression patterns" value="Expressed in rectum and 91 other cell types or tissues"/>
</dbReference>
<dbReference type="GO" id="GO:0005576">
    <property type="term" value="C:extracellular region"/>
    <property type="evidence" value="ECO:0007669"/>
    <property type="project" value="UniProtKB-SubCell"/>
</dbReference>
<dbReference type="GO" id="GO:0019814">
    <property type="term" value="C:immunoglobulin complex"/>
    <property type="evidence" value="ECO:0000318"/>
    <property type="project" value="GO_Central"/>
</dbReference>
<dbReference type="GO" id="GO:0005886">
    <property type="term" value="C:plasma membrane"/>
    <property type="evidence" value="ECO:0007669"/>
    <property type="project" value="UniProtKB-SubCell"/>
</dbReference>
<dbReference type="GO" id="GO:0002250">
    <property type="term" value="P:adaptive immune response"/>
    <property type="evidence" value="ECO:0007669"/>
    <property type="project" value="UniProtKB-KW"/>
</dbReference>
<dbReference type="GO" id="GO:0006955">
    <property type="term" value="P:immune response"/>
    <property type="evidence" value="ECO:0000318"/>
    <property type="project" value="GO_Central"/>
</dbReference>
<dbReference type="FunFam" id="2.60.40.10:FF:000365">
    <property type="entry name" value="If kappa light chain"/>
    <property type="match status" value="1"/>
</dbReference>
<dbReference type="Gene3D" id="2.60.40.10">
    <property type="entry name" value="Immunoglobulins"/>
    <property type="match status" value="1"/>
</dbReference>
<dbReference type="InterPro" id="IPR007110">
    <property type="entry name" value="Ig-like_dom"/>
</dbReference>
<dbReference type="InterPro" id="IPR036179">
    <property type="entry name" value="Ig-like_dom_sf"/>
</dbReference>
<dbReference type="InterPro" id="IPR013783">
    <property type="entry name" value="Ig-like_fold"/>
</dbReference>
<dbReference type="InterPro" id="IPR003599">
    <property type="entry name" value="Ig_sub"/>
</dbReference>
<dbReference type="InterPro" id="IPR013106">
    <property type="entry name" value="Ig_V-set"/>
</dbReference>
<dbReference type="InterPro" id="IPR050150">
    <property type="entry name" value="IgV_Light_Chain"/>
</dbReference>
<dbReference type="PANTHER" id="PTHR23267">
    <property type="entry name" value="IMMUNOGLOBULIN LIGHT CHAIN"/>
    <property type="match status" value="1"/>
</dbReference>
<dbReference type="Pfam" id="PF07686">
    <property type="entry name" value="V-set"/>
    <property type="match status" value="1"/>
</dbReference>
<dbReference type="SMART" id="SM00409">
    <property type="entry name" value="IG"/>
    <property type="match status" value="1"/>
</dbReference>
<dbReference type="SMART" id="SM00406">
    <property type="entry name" value="IGv"/>
    <property type="match status" value="1"/>
</dbReference>
<dbReference type="SUPFAM" id="SSF48726">
    <property type="entry name" value="Immunoglobulin"/>
    <property type="match status" value="1"/>
</dbReference>
<dbReference type="PROSITE" id="PS50835">
    <property type="entry name" value="IG_LIKE"/>
    <property type="match status" value="1"/>
</dbReference>
<reference key="1">
    <citation type="journal article" date="2005" name="Nature">
        <title>Generation and annotation of the DNA sequences of human chromosomes 2 and 4.</title>
        <authorList>
            <person name="Hillier L.W."/>
            <person name="Graves T.A."/>
            <person name="Fulton R.S."/>
            <person name="Fulton L.A."/>
            <person name="Pepin K.H."/>
            <person name="Minx P."/>
            <person name="Wagner-McPherson C."/>
            <person name="Layman D."/>
            <person name="Wylie K."/>
            <person name="Sekhon M."/>
            <person name="Becker M.C."/>
            <person name="Fewell G.A."/>
            <person name="Delehaunty K.D."/>
            <person name="Miner T.L."/>
            <person name="Nash W.E."/>
            <person name="Kremitzki C."/>
            <person name="Oddy L."/>
            <person name="Du H."/>
            <person name="Sun H."/>
            <person name="Bradshaw-Cordum H."/>
            <person name="Ali J."/>
            <person name="Carter J."/>
            <person name="Cordes M."/>
            <person name="Harris A."/>
            <person name="Isak A."/>
            <person name="van Brunt A."/>
            <person name="Nguyen C."/>
            <person name="Du F."/>
            <person name="Courtney L."/>
            <person name="Kalicki J."/>
            <person name="Ozersky P."/>
            <person name="Abbott S."/>
            <person name="Armstrong J."/>
            <person name="Belter E.A."/>
            <person name="Caruso L."/>
            <person name="Cedroni M."/>
            <person name="Cotton M."/>
            <person name="Davidson T."/>
            <person name="Desai A."/>
            <person name="Elliott G."/>
            <person name="Erb T."/>
            <person name="Fronick C."/>
            <person name="Gaige T."/>
            <person name="Haakenson W."/>
            <person name="Haglund K."/>
            <person name="Holmes A."/>
            <person name="Harkins R."/>
            <person name="Kim K."/>
            <person name="Kruchowski S.S."/>
            <person name="Strong C.M."/>
            <person name="Grewal N."/>
            <person name="Goyea E."/>
            <person name="Hou S."/>
            <person name="Levy A."/>
            <person name="Martinka S."/>
            <person name="Mead K."/>
            <person name="McLellan M.D."/>
            <person name="Meyer R."/>
            <person name="Randall-Maher J."/>
            <person name="Tomlinson C."/>
            <person name="Dauphin-Kohlberg S."/>
            <person name="Kozlowicz-Reilly A."/>
            <person name="Shah N."/>
            <person name="Swearengen-Shahid S."/>
            <person name="Snider J."/>
            <person name="Strong J.T."/>
            <person name="Thompson J."/>
            <person name="Yoakum M."/>
            <person name="Leonard S."/>
            <person name="Pearman C."/>
            <person name="Trani L."/>
            <person name="Radionenko M."/>
            <person name="Waligorski J.E."/>
            <person name="Wang C."/>
            <person name="Rock S.M."/>
            <person name="Tin-Wollam A.-M."/>
            <person name="Maupin R."/>
            <person name="Latreille P."/>
            <person name="Wendl M.C."/>
            <person name="Yang S.-P."/>
            <person name="Pohl C."/>
            <person name="Wallis J.W."/>
            <person name="Spieth J."/>
            <person name="Bieri T.A."/>
            <person name="Berkowicz N."/>
            <person name="Nelson J.O."/>
            <person name="Osborne J."/>
            <person name="Ding L."/>
            <person name="Meyer R."/>
            <person name="Sabo A."/>
            <person name="Shotland Y."/>
            <person name="Sinha P."/>
            <person name="Wohldmann P.E."/>
            <person name="Cook L.L."/>
            <person name="Hickenbotham M.T."/>
            <person name="Eldred J."/>
            <person name="Williams D."/>
            <person name="Jones T.A."/>
            <person name="She X."/>
            <person name="Ciccarelli F.D."/>
            <person name="Izaurralde E."/>
            <person name="Taylor J."/>
            <person name="Schmutz J."/>
            <person name="Myers R.M."/>
            <person name="Cox D.R."/>
            <person name="Huang X."/>
            <person name="McPherson J.D."/>
            <person name="Mardis E.R."/>
            <person name="Clifton S.W."/>
            <person name="Warren W.C."/>
            <person name="Chinwalla A.T."/>
            <person name="Eddy S.R."/>
            <person name="Marra M.A."/>
            <person name="Ovcharenko I."/>
            <person name="Furey T.S."/>
            <person name="Miller W."/>
            <person name="Eichler E.E."/>
            <person name="Bork P."/>
            <person name="Suyama M."/>
            <person name="Torrents D."/>
            <person name="Waterston R.H."/>
            <person name="Wilson R.K."/>
        </authorList>
    </citation>
    <scope>NUCLEOTIDE SEQUENCE [LARGE SCALE GENOMIC DNA] (IMGT ALLELE IGKV2D-29*01)</scope>
</reference>
<reference key="2">
    <citation type="journal article" date="2001" name="Exp. Clin. Immunogenet.">
        <title>Nomenclature of the human immunoglobulin kappa (IGK) genes.</title>
        <authorList>
            <person name="Lefranc M.P."/>
        </authorList>
    </citation>
    <scope>NOMEMCLATURE</scope>
</reference>
<reference key="3">
    <citation type="book" date="2001" name="The Immunoglobulin FactsBook.">
        <title>The Immunoglobulin FactsBook.</title>
        <editorList>
            <person name="Lefranc M.P."/>
            <person name="Lefranc G."/>
        </editorList>
        <authorList>
            <person name="Lefranc M.P."/>
            <person name="Lefranc G."/>
        </authorList>
    </citation>
    <scope>NOMENCLATURE</scope>
</reference>
<reference key="4">
    <citation type="journal article" date="2007" name="Annu. Rev. Genet.">
        <title>Immunoglobulin somatic hypermutation.</title>
        <authorList>
            <person name="Teng G."/>
            <person name="Papavasiliou F.N."/>
        </authorList>
    </citation>
    <scope>REVIEW ON SOMATIC HYPERMUTATION</scope>
</reference>
<reference key="5">
    <citation type="journal article" date="2010" name="J. Allergy Clin. Immunol.">
        <title>Structure and function of immunoglobulins.</title>
        <authorList>
            <person name="Schroeder H.W. Jr."/>
            <person name="Cavacini L."/>
        </authorList>
    </citation>
    <scope>REVIEW ON IMMUNOGLOBULINS</scope>
</reference>
<reference key="6">
    <citation type="journal article" date="2012" name="Nat. Rev. Immunol.">
        <title>Molecular programming of B cell memory.</title>
        <authorList>
            <person name="McHeyzer-Williams M."/>
            <person name="Okitsu S."/>
            <person name="Wang N."/>
            <person name="McHeyzer-Williams L."/>
        </authorList>
    </citation>
    <scope>REVIEW ON FUNCTION</scope>
</reference>
<reference key="7">
    <citation type="journal article" date="2014" name="Front. Immunol.">
        <title>Immunoglobulin and T Cell Receptor Genes: IMGT((R)) and the Birth and Rise of Immunoinformatics.</title>
        <authorList>
            <person name="Lefranc M.P."/>
        </authorList>
    </citation>
    <scope>NOMENCLATURE</scope>
</reference>
<comment type="function">
    <text evidence="5 6 7 8">V region of the variable domain of immunoglobulin light chains that participates in the antigen recognition (PubMed:24600447). Immunoglobulins, also known as antibodies, are membrane-bound or secreted glycoproteins produced by B lymphocytes. In the recognition phase of humoral immunity, the membrane-bound immunoglobulins serve as receptors which, upon binding of a specific antigen, trigger the clonal expansion and differentiation of B lymphocytes into immunoglobulins-secreting plasma cells. Secreted immunoglobulins mediate the effector phase of humoral immunity, which results in the elimination of bound antigens (PubMed:20176268, PubMed:22158414). The antigen binding site is formed by the variable domain of one heavy chain, together with that of its associated light chain. Thus, each immunoglobulin has two antigen binding sites with remarkable affinity for a particular antigen. The variable domains are assembled by a process called V-(D)-J rearrangement and can then be subjected to somatic hypermutations which, after exposure to antigen and selection, allow affinity maturation for a particular antigen (PubMed:17576170, PubMed:20176268).</text>
</comment>
<comment type="subunit">
    <text evidence="6">Immunoglobulins are composed of two identical heavy chains and two identical light chains; disulfide-linked.</text>
</comment>
<comment type="subcellular location">
    <subcellularLocation>
        <location evidence="6 7">Secreted</location>
    </subcellularLocation>
    <subcellularLocation>
        <location evidence="6 7">Cell membrane</location>
    </subcellularLocation>
</comment>
<comment type="polymorphism">
    <text>There are several alleles. The sequence shown is that of IMGT allele IGKV2D-29*01.</text>
</comment>
<comment type="caution">
    <text evidence="10">For an example of a full-length immunoglobulin kappa light chain see AC P0DOX7.</text>
</comment>
<sequence length="120" mass="13143">MRLPAQLLGLLMLWIPGSSADIVMTQTPLSLSVTPGQPASISCKSSQSLLHSDGKTYLYWYLQKPGQPPQLLIYEVSNRFSGVPDRFSGSGSGTDFTLKISRVEAEDVGVYYCMQSIQLP</sequence>
<organism>
    <name type="scientific">Homo sapiens</name>
    <name type="common">Human</name>
    <dbReference type="NCBI Taxonomy" id="9606"/>
    <lineage>
        <taxon>Eukaryota</taxon>
        <taxon>Metazoa</taxon>
        <taxon>Chordata</taxon>
        <taxon>Craniata</taxon>
        <taxon>Vertebrata</taxon>
        <taxon>Euteleostomi</taxon>
        <taxon>Mammalia</taxon>
        <taxon>Eutheria</taxon>
        <taxon>Euarchontoglires</taxon>
        <taxon>Primates</taxon>
        <taxon>Haplorrhini</taxon>
        <taxon>Catarrhini</taxon>
        <taxon>Hominidae</taxon>
        <taxon>Homo</taxon>
    </lineage>
</organism>
<proteinExistence type="evidence at protein level"/>